<keyword id="KW-0233">DNA recombination</keyword>
<keyword id="KW-1185">Reference proteome</keyword>
<keyword id="KW-0804">Transcription</keyword>
<keyword id="KW-0805">Transcription regulation</keyword>
<reference key="1">
    <citation type="journal article" date="1997" name="Virology">
        <title>The sequence of the Orgyia pseudotsugata multinucleocapsid nuclear polyhedrosis virus genome.</title>
        <authorList>
            <person name="Ahrens C.H."/>
            <person name="Russell R.R."/>
            <person name="Funk C.J."/>
            <person name="Evans J."/>
            <person name="Harwood S."/>
            <person name="Rohrmann G.F."/>
        </authorList>
    </citation>
    <scope>NUCLEOTIDE SEQUENCE [LARGE SCALE GENOMIC DNA]</scope>
</reference>
<proteinExistence type="inferred from homology"/>
<name>VLF1_NPVOP</name>
<sequence length="374" mass="43165">MDGLGVRNETTFNDWKARIQSASRFEHVFDLATDRQRCTPDEVKNDSLWSKYMFPKPFAPTTLKSYKSRLIKIIFSLVEEADLQNPAYDLDREFDSVEFQHLLVSPKELCKRMLELRSVTKETLQLTINFYTNAMNLPEFKIPRMVMLPRDKELKTIREKEKNFMLKNAIDTILNFIDSKIKLMNSDYVHDRGLIRGAIVFCIMLGTGMRINEARQLSVDDLNVLIKKGKLRSDTIGLKRKRSRKNTLNNIKTKPLELAREIYARNPTVLQISKNTSTPFKDFRRLLDEAGVEMERPRSNMIRHYLSSNLYNSGVPLQKVARLMNHESPASTKPYLNKYNFDESSSDEESGGNNRDSSTGSSANSSSLYYQTGD</sequence>
<organismHost>
    <name type="scientific">Orgyia pseudotsugata</name>
    <name type="common">Douglas-fir tussock moth</name>
    <dbReference type="NCBI Taxonomy" id="33414"/>
</organismHost>
<dbReference type="EMBL" id="U75930">
    <property type="protein sequence ID" value="AAC59079.1"/>
    <property type="molecule type" value="Genomic_DNA"/>
</dbReference>
<dbReference type="RefSeq" id="NP_046236.1">
    <property type="nucleotide sequence ID" value="NC_001875.2"/>
</dbReference>
<dbReference type="SMR" id="O10330"/>
<dbReference type="KEGG" id="vg:912008"/>
<dbReference type="OrthoDB" id="5217at10239"/>
<dbReference type="Proteomes" id="UP000009248">
    <property type="component" value="Genome"/>
</dbReference>
<dbReference type="GO" id="GO:0003677">
    <property type="term" value="F:DNA binding"/>
    <property type="evidence" value="ECO:0007669"/>
    <property type="project" value="InterPro"/>
</dbReference>
<dbReference type="GO" id="GO:0015074">
    <property type="term" value="P:DNA integration"/>
    <property type="evidence" value="ECO:0007669"/>
    <property type="project" value="InterPro"/>
</dbReference>
<dbReference type="GO" id="GO:0006310">
    <property type="term" value="P:DNA recombination"/>
    <property type="evidence" value="ECO:0007669"/>
    <property type="project" value="UniProtKB-KW"/>
</dbReference>
<dbReference type="CDD" id="cd00397">
    <property type="entry name" value="DNA_BRE_C"/>
    <property type="match status" value="1"/>
</dbReference>
<dbReference type="Gene3D" id="1.10.443.10">
    <property type="entry name" value="Intergrase catalytic core"/>
    <property type="match status" value="1"/>
</dbReference>
<dbReference type="InterPro" id="IPR011010">
    <property type="entry name" value="DNA_brk_join_enz"/>
</dbReference>
<dbReference type="InterPro" id="IPR013762">
    <property type="entry name" value="Integrase-like_cat_sf"/>
</dbReference>
<dbReference type="InterPro" id="IPR002104">
    <property type="entry name" value="Integrase_catalytic"/>
</dbReference>
<dbReference type="InterPro" id="IPR050090">
    <property type="entry name" value="Tyrosine_recombinase_XerCD"/>
</dbReference>
<dbReference type="PANTHER" id="PTHR30349">
    <property type="entry name" value="PHAGE INTEGRASE-RELATED"/>
    <property type="match status" value="1"/>
</dbReference>
<dbReference type="PANTHER" id="PTHR30349:SF64">
    <property type="entry name" value="PROPHAGE INTEGRASE INTD-RELATED"/>
    <property type="match status" value="1"/>
</dbReference>
<dbReference type="Pfam" id="PF00589">
    <property type="entry name" value="Phage_integrase"/>
    <property type="match status" value="1"/>
</dbReference>
<dbReference type="SUPFAM" id="SSF56349">
    <property type="entry name" value="DNA breaking-rejoining enzymes"/>
    <property type="match status" value="1"/>
</dbReference>
<dbReference type="PROSITE" id="PS51898">
    <property type="entry name" value="TYR_RECOMBINASE"/>
    <property type="match status" value="1"/>
</dbReference>
<organism>
    <name type="scientific">Orgyia pseudotsugata multicapsid polyhedrosis virus</name>
    <name type="common">OpMNPV</name>
    <dbReference type="NCBI Taxonomy" id="262177"/>
    <lineage>
        <taxon>Viruses</taxon>
        <taxon>Viruses incertae sedis</taxon>
        <taxon>Naldaviricetes</taxon>
        <taxon>Lefavirales</taxon>
        <taxon>Baculoviridae</taxon>
        <taxon>Alphabaculovirus</taxon>
        <taxon>Alphabaculovirus orpseudotsugatae</taxon>
    </lineage>
</organism>
<feature type="chain" id="PRO_0000132876" description="Very late expression factor 1">
    <location>
        <begin position="1"/>
        <end position="374"/>
    </location>
</feature>
<feature type="domain" description="Tyr recombinase" evidence="2">
    <location>
        <begin position="169"/>
        <end position="349"/>
    </location>
</feature>
<feature type="region of interest" description="Disordered" evidence="3">
    <location>
        <begin position="328"/>
        <end position="374"/>
    </location>
</feature>
<feature type="compositionally biased region" description="Low complexity" evidence="3">
    <location>
        <begin position="357"/>
        <end position="367"/>
    </location>
</feature>
<feature type="active site" evidence="2">
    <location>
        <position position="210"/>
    </location>
</feature>
<feature type="active site" evidence="2">
    <location>
        <position position="239"/>
    </location>
</feature>
<feature type="active site" evidence="2">
    <location>
        <position position="303"/>
    </location>
</feature>
<feature type="active site" evidence="2">
    <location>
        <position position="326"/>
    </location>
</feature>
<feature type="active site" description="O-(3'-phospho-DNA)-tyrosine intermediate" evidence="2">
    <location>
        <position position="335"/>
    </location>
</feature>
<accession>O10330</accession>
<protein>
    <recommendedName>
        <fullName>Very late expression factor 1</fullName>
    </recommendedName>
</protein>
<gene>
    <name type="primary">VLF-1</name>
    <name type="ORF">ORF80</name>
</gene>
<evidence type="ECO:0000250" key="1"/>
<evidence type="ECO:0000255" key="2">
    <source>
        <dbReference type="PROSITE-ProRule" id="PRU01246"/>
    </source>
</evidence>
<evidence type="ECO:0000256" key="3">
    <source>
        <dbReference type="SAM" id="MobiDB-lite"/>
    </source>
</evidence>
<comment type="function">
    <text evidence="1">Involved in very late gene activation.</text>
</comment>
<comment type="similarity">
    <text evidence="2">Belongs to the 'phage' integrase family.</text>
</comment>